<name>COQ6_DANRE</name>
<dbReference type="EC" id="1.14.15.45" evidence="1"/>
<dbReference type="EC" id="1.14.15.46" evidence="1"/>
<dbReference type="EMBL" id="BX936443">
    <property type="status" value="NOT_ANNOTATED_CDS"/>
    <property type="molecule type" value="Genomic_DNA"/>
</dbReference>
<dbReference type="EMBL" id="BC122260">
    <property type="protein sequence ID" value="AAI22261.1"/>
    <property type="molecule type" value="mRNA"/>
</dbReference>
<dbReference type="RefSeq" id="NP_001038869.1">
    <property type="nucleotide sequence ID" value="NM_001045404.1"/>
</dbReference>
<dbReference type="SMR" id="F1RAX8"/>
<dbReference type="FunCoup" id="F1RAX8">
    <property type="interactions" value="2451"/>
</dbReference>
<dbReference type="STRING" id="7955.ENSDARP00000079444"/>
<dbReference type="PaxDb" id="7955-ENSDARP00000079444"/>
<dbReference type="Ensembl" id="ENSDART00000085009">
    <property type="protein sequence ID" value="ENSDARP00000079444"/>
    <property type="gene ID" value="ENSDARG00000060380"/>
</dbReference>
<dbReference type="GeneID" id="751691"/>
<dbReference type="KEGG" id="dre:751691"/>
<dbReference type="AGR" id="ZFIN:ZDB-GENE-060825-297"/>
<dbReference type="CTD" id="51004"/>
<dbReference type="ZFIN" id="ZDB-GENE-060825-297">
    <property type="gene designation" value="coq6"/>
</dbReference>
<dbReference type="eggNOG" id="KOG3855">
    <property type="taxonomic scope" value="Eukaryota"/>
</dbReference>
<dbReference type="HOGENOM" id="CLU_009665_8_0_1"/>
<dbReference type="InParanoid" id="F1RAX8"/>
<dbReference type="OMA" id="VKQMQVW"/>
<dbReference type="OrthoDB" id="683240at2759"/>
<dbReference type="PhylomeDB" id="F1RAX8"/>
<dbReference type="TreeFam" id="TF105772"/>
<dbReference type="Reactome" id="R-DRE-2142789">
    <property type="pathway name" value="Ubiquinol biosynthesis"/>
</dbReference>
<dbReference type="UniPathway" id="UPA00232"/>
<dbReference type="PRO" id="PR:F1RAX8"/>
<dbReference type="Proteomes" id="UP000000437">
    <property type="component" value="Chromosome 17"/>
</dbReference>
<dbReference type="Bgee" id="ENSDARG00000060380">
    <property type="expression patterns" value="Expressed in mature ovarian follicle and 20 other cell types or tissues"/>
</dbReference>
<dbReference type="ExpressionAtlas" id="F1RAX8">
    <property type="expression patterns" value="baseline"/>
</dbReference>
<dbReference type="GO" id="GO:0042995">
    <property type="term" value="C:cell projection"/>
    <property type="evidence" value="ECO:0007669"/>
    <property type="project" value="UniProtKB-SubCell"/>
</dbReference>
<dbReference type="GO" id="GO:0031314">
    <property type="term" value="C:extrinsic component of mitochondrial inner membrane"/>
    <property type="evidence" value="ECO:0007669"/>
    <property type="project" value="UniProtKB-UniRule"/>
</dbReference>
<dbReference type="GO" id="GO:0005794">
    <property type="term" value="C:Golgi apparatus"/>
    <property type="evidence" value="ECO:0007669"/>
    <property type="project" value="UniProtKB-SubCell"/>
</dbReference>
<dbReference type="GO" id="GO:0005739">
    <property type="term" value="C:mitochondrion"/>
    <property type="evidence" value="ECO:0000318"/>
    <property type="project" value="GO_Central"/>
</dbReference>
<dbReference type="GO" id="GO:0120538">
    <property type="term" value="F:2-methoxy-6-polyprenolphenol 4-hydroxylase activity"/>
    <property type="evidence" value="ECO:0000250"/>
    <property type="project" value="UniProtKB"/>
</dbReference>
<dbReference type="GO" id="GO:0106364">
    <property type="term" value="F:4-hydroxy-3-all-trans-polyprenylbenzoate oxygenase activity"/>
    <property type="evidence" value="ECO:0000250"/>
    <property type="project" value="UniProtKB"/>
</dbReference>
<dbReference type="GO" id="GO:0071949">
    <property type="term" value="F:FAD binding"/>
    <property type="evidence" value="ECO:0007669"/>
    <property type="project" value="InterPro"/>
</dbReference>
<dbReference type="GO" id="GO:0016491">
    <property type="term" value="F:oxidoreductase activity"/>
    <property type="evidence" value="ECO:0000318"/>
    <property type="project" value="GO_Central"/>
</dbReference>
<dbReference type="GO" id="GO:0016712">
    <property type="term" value="F:oxidoreductase activity, acting on paired donors, with incorporation or reduction of molecular oxygen, reduced flavin or flavoprotein as one donor, and incorporation of one atom of oxygen"/>
    <property type="evidence" value="ECO:0007669"/>
    <property type="project" value="UniProtKB-UniRule"/>
</dbReference>
<dbReference type="GO" id="GO:0006744">
    <property type="term" value="P:ubiquinone biosynthetic process"/>
    <property type="evidence" value="ECO:0000250"/>
    <property type="project" value="UniProtKB"/>
</dbReference>
<dbReference type="FunFam" id="3.30.9.10:FF:000111">
    <property type="entry name" value="Ubiquinone biosynthesis monooxygenase COQ6, mitochondrial"/>
    <property type="match status" value="1"/>
</dbReference>
<dbReference type="FunFam" id="3.50.50.60:FF:000066">
    <property type="entry name" value="Ubiquinone biosynthesis monooxygenase COQ6, mitochondrial"/>
    <property type="match status" value="1"/>
</dbReference>
<dbReference type="FunFam" id="3.50.50.60:FF:000086">
    <property type="entry name" value="Ubiquinone biosynthesis monooxygenase COQ6, mitochondrial"/>
    <property type="match status" value="1"/>
</dbReference>
<dbReference type="Gene3D" id="3.50.50.60">
    <property type="entry name" value="FAD/NAD(P)-binding domain"/>
    <property type="match status" value="2"/>
</dbReference>
<dbReference type="HAMAP" id="MF_03193">
    <property type="entry name" value="COQ6_monooxygenase"/>
    <property type="match status" value="1"/>
</dbReference>
<dbReference type="InterPro" id="IPR002938">
    <property type="entry name" value="FAD-bd"/>
</dbReference>
<dbReference type="InterPro" id="IPR036188">
    <property type="entry name" value="FAD/NAD-bd_sf"/>
</dbReference>
<dbReference type="InterPro" id="IPR018168">
    <property type="entry name" value="Ubi_Hdrlase_CS"/>
</dbReference>
<dbReference type="InterPro" id="IPR010971">
    <property type="entry name" value="UbiH/COQ6"/>
</dbReference>
<dbReference type="InterPro" id="IPR051205">
    <property type="entry name" value="UbiH/COQ6_monooxygenase"/>
</dbReference>
<dbReference type="InterPro" id="IPR000689">
    <property type="entry name" value="UbQ_mOase_COQ6"/>
</dbReference>
<dbReference type="NCBIfam" id="TIGR01989">
    <property type="entry name" value="COQ6"/>
    <property type="match status" value="1"/>
</dbReference>
<dbReference type="NCBIfam" id="TIGR01988">
    <property type="entry name" value="Ubi-OHases"/>
    <property type="match status" value="1"/>
</dbReference>
<dbReference type="PANTHER" id="PTHR43876">
    <property type="entry name" value="UBIQUINONE BIOSYNTHESIS MONOOXYGENASE COQ6, MITOCHONDRIAL"/>
    <property type="match status" value="1"/>
</dbReference>
<dbReference type="PANTHER" id="PTHR43876:SF7">
    <property type="entry name" value="UBIQUINONE BIOSYNTHESIS MONOOXYGENASE COQ6, MITOCHONDRIAL"/>
    <property type="match status" value="1"/>
</dbReference>
<dbReference type="Pfam" id="PF01494">
    <property type="entry name" value="FAD_binding_3"/>
    <property type="match status" value="2"/>
</dbReference>
<dbReference type="PRINTS" id="PR00420">
    <property type="entry name" value="RNGMNOXGNASE"/>
</dbReference>
<dbReference type="SUPFAM" id="SSF51905">
    <property type="entry name" value="FAD/NAD(P)-binding domain"/>
    <property type="match status" value="1"/>
</dbReference>
<dbReference type="PROSITE" id="PS01304">
    <property type="entry name" value="UBIH"/>
    <property type="match status" value="1"/>
</dbReference>
<feature type="transit peptide" description="Mitochondrion" evidence="1">
    <location>
        <begin position="1"/>
        <end position="41"/>
    </location>
</feature>
<feature type="chain" id="PRO_0000418622" description="Ubiquinone biosynthesis monooxygenase COQ6, mitochondrial">
    <location>
        <begin position="42"/>
        <end position="484"/>
    </location>
</feature>
<feature type="sequence conflict" description="In Ref. 2; AAI22261." evidence="2" ref="2">
    <original>V</original>
    <variation>F</variation>
    <location>
        <position position="12"/>
    </location>
</feature>
<accession>F1RAX8</accession>
<accession>Q0P462</accession>
<organism>
    <name type="scientific">Danio rerio</name>
    <name type="common">Zebrafish</name>
    <name type="synonym">Brachydanio rerio</name>
    <dbReference type="NCBI Taxonomy" id="7955"/>
    <lineage>
        <taxon>Eukaryota</taxon>
        <taxon>Metazoa</taxon>
        <taxon>Chordata</taxon>
        <taxon>Craniata</taxon>
        <taxon>Vertebrata</taxon>
        <taxon>Euteleostomi</taxon>
        <taxon>Actinopterygii</taxon>
        <taxon>Neopterygii</taxon>
        <taxon>Teleostei</taxon>
        <taxon>Ostariophysi</taxon>
        <taxon>Cypriniformes</taxon>
        <taxon>Danionidae</taxon>
        <taxon>Danioninae</taxon>
        <taxon>Danio</taxon>
    </lineage>
</organism>
<reference key="1">
    <citation type="journal article" date="2013" name="Nature">
        <title>The zebrafish reference genome sequence and its relationship to the human genome.</title>
        <authorList>
            <person name="Howe K."/>
            <person name="Clark M.D."/>
            <person name="Torroja C.F."/>
            <person name="Torrance J."/>
            <person name="Berthelot C."/>
            <person name="Muffato M."/>
            <person name="Collins J.E."/>
            <person name="Humphray S."/>
            <person name="McLaren K."/>
            <person name="Matthews L."/>
            <person name="McLaren S."/>
            <person name="Sealy I."/>
            <person name="Caccamo M."/>
            <person name="Churcher C."/>
            <person name="Scott C."/>
            <person name="Barrett J.C."/>
            <person name="Koch R."/>
            <person name="Rauch G.J."/>
            <person name="White S."/>
            <person name="Chow W."/>
            <person name="Kilian B."/>
            <person name="Quintais L.T."/>
            <person name="Guerra-Assuncao J.A."/>
            <person name="Zhou Y."/>
            <person name="Gu Y."/>
            <person name="Yen J."/>
            <person name="Vogel J.H."/>
            <person name="Eyre T."/>
            <person name="Redmond S."/>
            <person name="Banerjee R."/>
            <person name="Chi J."/>
            <person name="Fu B."/>
            <person name="Langley E."/>
            <person name="Maguire S.F."/>
            <person name="Laird G.K."/>
            <person name="Lloyd D."/>
            <person name="Kenyon E."/>
            <person name="Donaldson S."/>
            <person name="Sehra H."/>
            <person name="Almeida-King J."/>
            <person name="Loveland J."/>
            <person name="Trevanion S."/>
            <person name="Jones M."/>
            <person name="Quail M."/>
            <person name="Willey D."/>
            <person name="Hunt A."/>
            <person name="Burton J."/>
            <person name="Sims S."/>
            <person name="McLay K."/>
            <person name="Plumb B."/>
            <person name="Davis J."/>
            <person name="Clee C."/>
            <person name="Oliver K."/>
            <person name="Clark R."/>
            <person name="Riddle C."/>
            <person name="Elliot D."/>
            <person name="Threadgold G."/>
            <person name="Harden G."/>
            <person name="Ware D."/>
            <person name="Begum S."/>
            <person name="Mortimore B."/>
            <person name="Kerry G."/>
            <person name="Heath P."/>
            <person name="Phillimore B."/>
            <person name="Tracey A."/>
            <person name="Corby N."/>
            <person name="Dunn M."/>
            <person name="Johnson C."/>
            <person name="Wood J."/>
            <person name="Clark S."/>
            <person name="Pelan S."/>
            <person name="Griffiths G."/>
            <person name="Smith M."/>
            <person name="Glithero R."/>
            <person name="Howden P."/>
            <person name="Barker N."/>
            <person name="Lloyd C."/>
            <person name="Stevens C."/>
            <person name="Harley J."/>
            <person name="Holt K."/>
            <person name="Panagiotidis G."/>
            <person name="Lovell J."/>
            <person name="Beasley H."/>
            <person name="Henderson C."/>
            <person name="Gordon D."/>
            <person name="Auger K."/>
            <person name="Wright D."/>
            <person name="Collins J."/>
            <person name="Raisen C."/>
            <person name="Dyer L."/>
            <person name="Leung K."/>
            <person name="Robertson L."/>
            <person name="Ambridge K."/>
            <person name="Leongamornlert D."/>
            <person name="McGuire S."/>
            <person name="Gilderthorp R."/>
            <person name="Griffiths C."/>
            <person name="Manthravadi D."/>
            <person name="Nichol S."/>
            <person name="Barker G."/>
            <person name="Whitehead S."/>
            <person name="Kay M."/>
            <person name="Brown J."/>
            <person name="Murnane C."/>
            <person name="Gray E."/>
            <person name="Humphries M."/>
            <person name="Sycamore N."/>
            <person name="Barker D."/>
            <person name="Saunders D."/>
            <person name="Wallis J."/>
            <person name="Babbage A."/>
            <person name="Hammond S."/>
            <person name="Mashreghi-Mohammadi M."/>
            <person name="Barr L."/>
            <person name="Martin S."/>
            <person name="Wray P."/>
            <person name="Ellington A."/>
            <person name="Matthews N."/>
            <person name="Ellwood M."/>
            <person name="Woodmansey R."/>
            <person name="Clark G."/>
            <person name="Cooper J."/>
            <person name="Tromans A."/>
            <person name="Grafham D."/>
            <person name="Skuce C."/>
            <person name="Pandian R."/>
            <person name="Andrews R."/>
            <person name="Harrison E."/>
            <person name="Kimberley A."/>
            <person name="Garnett J."/>
            <person name="Fosker N."/>
            <person name="Hall R."/>
            <person name="Garner P."/>
            <person name="Kelly D."/>
            <person name="Bird C."/>
            <person name="Palmer S."/>
            <person name="Gehring I."/>
            <person name="Berger A."/>
            <person name="Dooley C.M."/>
            <person name="Ersan-Urun Z."/>
            <person name="Eser C."/>
            <person name="Geiger H."/>
            <person name="Geisler M."/>
            <person name="Karotki L."/>
            <person name="Kirn A."/>
            <person name="Konantz J."/>
            <person name="Konantz M."/>
            <person name="Oberlander M."/>
            <person name="Rudolph-Geiger S."/>
            <person name="Teucke M."/>
            <person name="Lanz C."/>
            <person name="Raddatz G."/>
            <person name="Osoegawa K."/>
            <person name="Zhu B."/>
            <person name="Rapp A."/>
            <person name="Widaa S."/>
            <person name="Langford C."/>
            <person name="Yang F."/>
            <person name="Schuster S.C."/>
            <person name="Carter N.P."/>
            <person name="Harrow J."/>
            <person name="Ning Z."/>
            <person name="Herrero J."/>
            <person name="Searle S.M."/>
            <person name="Enright A."/>
            <person name="Geisler R."/>
            <person name="Plasterk R.H."/>
            <person name="Lee C."/>
            <person name="Westerfield M."/>
            <person name="de Jong P.J."/>
            <person name="Zon L.I."/>
            <person name="Postlethwait J.H."/>
            <person name="Nusslein-Volhard C."/>
            <person name="Hubbard T.J."/>
            <person name="Roest Crollius H."/>
            <person name="Rogers J."/>
            <person name="Stemple D.L."/>
        </authorList>
    </citation>
    <scope>NUCLEOTIDE SEQUENCE [LARGE SCALE GENOMIC DNA]</scope>
    <source>
        <strain>Tuebingen</strain>
    </source>
</reference>
<reference key="2">
    <citation type="submission" date="2006-08" db="EMBL/GenBank/DDBJ databases">
        <authorList>
            <consortium name="NIH - Zebrafish Gene Collection (ZGC) project"/>
        </authorList>
    </citation>
    <scope>NUCLEOTIDE SEQUENCE [LARGE SCALE MRNA]</scope>
</reference>
<keyword id="KW-0966">Cell projection</keyword>
<keyword id="KW-0274">FAD</keyword>
<keyword id="KW-0285">Flavoprotein</keyword>
<keyword id="KW-0333">Golgi apparatus</keyword>
<keyword id="KW-0472">Membrane</keyword>
<keyword id="KW-0496">Mitochondrion</keyword>
<keyword id="KW-0999">Mitochondrion inner membrane</keyword>
<keyword id="KW-0503">Monooxygenase</keyword>
<keyword id="KW-0560">Oxidoreductase</keyword>
<keyword id="KW-1185">Reference proteome</keyword>
<keyword id="KW-0809">Transit peptide</keyword>
<keyword id="KW-0831">Ubiquinone biosynthesis</keyword>
<comment type="function">
    <text evidence="1">FAD-dependent monooxygenase required for two non-consecutive steps during ubiquinone biosynthesis. Required for the C5-ring hydroxylation during ubiquinone biosynthesis by catalyzing the hydroxylation of 4-hydroxy-3-(all-trans-polyprenyl)benzoic acid to 3,4-dihydroxy-5-(all-trans-polyprenyl)benzoic acid. Also acts downstream of coq4, for the C1-hydroxylation during ubiquinone biosynthesis by catalyzing the hydroxylation of 2-methoxy-6-(all-trans-polyprenyl)phenol to 2-methoxy-6-(all-trans-polyprenyl)benzene-1,4-diol. The electrons required for the hydroxylation reaction are funneled indirectly to coq6 from NADPH via a ferredoxin/ferredoxin reductase system.</text>
</comment>
<comment type="catalytic activity">
    <reaction evidence="1">
        <text>a 4-hydroxy-3-(all-trans-polyprenyl)benzoate + 2 reduced [2Fe-2S]-[ferredoxin] + O2 + 2 H(+) = a 3,4-dihydroxy-5-(all-trans-polyprenyl)benzoate + 2 oxidized [2Fe-2S]-[ferredoxin] + H2O</text>
        <dbReference type="Rhea" id="RHEA:81195"/>
        <dbReference type="Rhea" id="RHEA-COMP:9514"/>
        <dbReference type="Rhea" id="RHEA-COMP:10000"/>
        <dbReference type="Rhea" id="RHEA-COMP:10001"/>
        <dbReference type="Rhea" id="RHEA-COMP:10930"/>
        <dbReference type="ChEBI" id="CHEBI:15377"/>
        <dbReference type="ChEBI" id="CHEBI:15378"/>
        <dbReference type="ChEBI" id="CHEBI:15379"/>
        <dbReference type="ChEBI" id="CHEBI:33737"/>
        <dbReference type="ChEBI" id="CHEBI:33738"/>
        <dbReference type="ChEBI" id="CHEBI:64694"/>
        <dbReference type="ChEBI" id="CHEBI:78396"/>
        <dbReference type="EC" id="1.14.15.45"/>
    </reaction>
</comment>
<comment type="catalytic activity">
    <reaction evidence="1">
        <text>a 2-methoxy-6-(all-trans-polyprenyl)phenol + 2 reduced [2Fe-2S]-[ferredoxin] + O2 + 2 H(+) = a 2-methoxy-6-(all-trans-polyprenyl)benzene-1,4-diol + 2 oxidized [2Fe-2S]-[ferredoxin] + H2O</text>
        <dbReference type="Rhea" id="RHEA:81183"/>
        <dbReference type="Rhea" id="RHEA-COMP:9551"/>
        <dbReference type="Rhea" id="RHEA-COMP:10000"/>
        <dbReference type="Rhea" id="RHEA-COMP:10001"/>
        <dbReference type="Rhea" id="RHEA-COMP:10858"/>
        <dbReference type="ChEBI" id="CHEBI:15377"/>
        <dbReference type="ChEBI" id="CHEBI:15378"/>
        <dbReference type="ChEBI" id="CHEBI:15379"/>
        <dbReference type="ChEBI" id="CHEBI:33737"/>
        <dbReference type="ChEBI" id="CHEBI:33738"/>
        <dbReference type="ChEBI" id="CHEBI:62731"/>
        <dbReference type="ChEBI" id="CHEBI:84166"/>
        <dbReference type="EC" id="1.14.15.46"/>
    </reaction>
</comment>
<comment type="cofactor">
    <cofactor evidence="1">
        <name>FAD</name>
        <dbReference type="ChEBI" id="CHEBI:57692"/>
    </cofactor>
</comment>
<comment type="pathway">
    <text evidence="1">Cofactor biosynthesis; ubiquinone biosynthesis.</text>
</comment>
<comment type="subunit">
    <text evidence="1">Component of a multi-subunit COQ enzyme complex, composed of at least coq3, coq4, coq5, coq6, coq7 and coq9. Interacts with coq8b and coq7.</text>
</comment>
<comment type="subcellular location">
    <subcellularLocation>
        <location evidence="1">Mitochondrion inner membrane</location>
        <topology evidence="1">Peripheral membrane protein</topology>
        <orientation evidence="1">Matrix side</orientation>
    </subcellularLocation>
    <subcellularLocation>
        <location evidence="1">Golgi apparatus</location>
    </subcellularLocation>
    <subcellularLocation>
        <location evidence="1">Cell projection</location>
    </subcellularLocation>
    <text evidence="1">Localizes to cell processes and Golgi apparatus in podocytes.</text>
</comment>
<comment type="similarity">
    <text evidence="1">Belongs to the UbiH/COQ6 family.</text>
</comment>
<proteinExistence type="evidence at transcript level"/>
<protein>
    <recommendedName>
        <fullName evidence="1">Ubiquinone biosynthesis monooxygenase COQ6, mitochondrial</fullName>
        <ecNumber evidence="1">1.14.15.45</ecNumber>
    </recommendedName>
    <alternativeName>
        <fullName evidence="1">2-methoxy-6-polyprenolphenol 4-hydroxylase</fullName>
        <ecNumber evidence="1">1.14.15.46</ecNumber>
    </alternativeName>
    <alternativeName>
        <fullName evidence="1">Coenzyme Q10 monooxygenase 6</fullName>
    </alternativeName>
</protein>
<sequence length="484" mass="52999">MLSLAKAKLAVVGIGRQCVAVRTLNGARAVHRSFSSSEHDQDSSTSENELFDIIISGGGMVGTAMACSLGLDPNLTGKKILLLEAGHEKKMDKIPETYSTRVSSISPGSATLLSGLGAWDHIVNMRCKPYNKMQVWDACSDALITFDKENLQDEMAYIVENDVIVAALTKQLQTLSDHVKVQYRTKVVKYTWPHPYHVSESIPWVQVALANGKTLHTKLLIGADGPNSMVRREAGIPTVKWNYDQSAVVAVLHLSEPTENNVAWQRFLPTGPIAMLPLSDTESSLVWSTSHQHAEELLQMDEESFVDAINSAFWSNENHSELVETAGSLFRMALSVLMPDSGSARQLPPSVSGIGPKSRVMFPLGMGHATEYIRHRVALIGDAAHRVHPLAGQGANLGFGDVSYLTQVLSQAAYNGKDIGAMQHLLEFETERQRHNLPMMTAIDLMKRLYSSNTAPMVLLRTFGLQATNAVPPLKEQIMAFASK</sequence>
<evidence type="ECO:0000255" key="1">
    <source>
        <dbReference type="HAMAP-Rule" id="MF_03193"/>
    </source>
</evidence>
<evidence type="ECO:0000305" key="2"/>
<gene>
    <name evidence="1" type="primary">coq6</name>
</gene>